<accession>A5UKB0</accession>
<feature type="chain" id="PRO_1000059167" description="A-type ATP synthase subunit D">
    <location>
        <begin position="1"/>
        <end position="231"/>
    </location>
</feature>
<name>AATD_METS3</name>
<gene>
    <name evidence="1" type="primary">atpD</name>
    <name type="ordered locus">Msm_0433</name>
</gene>
<protein>
    <recommendedName>
        <fullName evidence="1">A-type ATP synthase subunit D</fullName>
    </recommendedName>
</protein>
<reference key="1">
    <citation type="journal article" date="2007" name="Proc. Natl. Acad. Sci. U.S.A.">
        <title>Genomic and metabolic adaptations of Methanobrevibacter smithii to the human gut.</title>
        <authorList>
            <person name="Samuel B.S."/>
            <person name="Hansen E.E."/>
            <person name="Manchester J.K."/>
            <person name="Coutinho P.M."/>
            <person name="Henrissat B."/>
            <person name="Fulton R."/>
            <person name="Latreille P."/>
            <person name="Kim K."/>
            <person name="Wilson R.K."/>
            <person name="Gordon J.I."/>
        </authorList>
    </citation>
    <scope>NUCLEOTIDE SEQUENCE [LARGE SCALE GENOMIC DNA]</scope>
    <source>
        <strain>ATCC 35061 / DSM 861 / OCM 144 / PS</strain>
    </source>
</reference>
<evidence type="ECO:0000255" key="1">
    <source>
        <dbReference type="HAMAP-Rule" id="MF_00271"/>
    </source>
</evidence>
<comment type="function">
    <text evidence="1">Component of the A-type ATP synthase that produces ATP from ADP in the presence of a proton gradient across the membrane.</text>
</comment>
<comment type="subunit">
    <text evidence="1">Has multiple subunits with at least A(3), B(3), C, D, E, F, H, I and proteolipid K(x).</text>
</comment>
<comment type="subcellular location">
    <subcellularLocation>
        <location evidence="1">Cell membrane</location>
        <topology evidence="1">Peripheral membrane protein</topology>
    </subcellularLocation>
</comment>
<comment type="similarity">
    <text evidence="1">Belongs to the V-ATPase D subunit family.</text>
</comment>
<sequence>MAQDIIDGINPTRMELLSLKNRTKLAVKGHGLLKEKRDALIKEFFDILDRVKGVREAAERSLKEANEALLEAQIAMGDLAVRKASLSVKESIDVDIKSRSVMGVSVPVTNVKMEERSIIDRGYSFSDTTIQLDEAAKKFEESIKFLIELGEVEKTIFLLAEEIEATKRRVNALEHIMIPRFENTEKYIDMRLQEMERENFVRLKMIRSTIEKKDNEAKEAAIEEEAAEVEA</sequence>
<dbReference type="EMBL" id="CP000678">
    <property type="protein sequence ID" value="ABQ86638.1"/>
    <property type="molecule type" value="Genomic_DNA"/>
</dbReference>
<dbReference type="RefSeq" id="WP_004032181.1">
    <property type="nucleotide sequence ID" value="NZ_CP117965.1"/>
</dbReference>
<dbReference type="SMR" id="A5UKB0"/>
<dbReference type="STRING" id="420247.Msm_0433"/>
<dbReference type="EnsemblBacteria" id="ABQ86638">
    <property type="protein sequence ID" value="ABQ86638"/>
    <property type="gene ID" value="Msm_0433"/>
</dbReference>
<dbReference type="KEGG" id="msi:Msm_0433"/>
<dbReference type="PATRIC" id="fig|420247.28.peg.433"/>
<dbReference type="eggNOG" id="arCOG04101">
    <property type="taxonomic scope" value="Archaea"/>
</dbReference>
<dbReference type="HOGENOM" id="CLU_069688_2_1_2"/>
<dbReference type="Proteomes" id="UP000001992">
    <property type="component" value="Chromosome"/>
</dbReference>
<dbReference type="GO" id="GO:0005886">
    <property type="term" value="C:plasma membrane"/>
    <property type="evidence" value="ECO:0007669"/>
    <property type="project" value="UniProtKB-SubCell"/>
</dbReference>
<dbReference type="GO" id="GO:0005524">
    <property type="term" value="F:ATP binding"/>
    <property type="evidence" value="ECO:0007669"/>
    <property type="project" value="UniProtKB-UniRule"/>
</dbReference>
<dbReference type="GO" id="GO:0046933">
    <property type="term" value="F:proton-transporting ATP synthase activity, rotational mechanism"/>
    <property type="evidence" value="ECO:0007669"/>
    <property type="project" value="UniProtKB-UniRule"/>
</dbReference>
<dbReference type="GO" id="GO:0046961">
    <property type="term" value="F:proton-transporting ATPase activity, rotational mechanism"/>
    <property type="evidence" value="ECO:0007669"/>
    <property type="project" value="InterPro"/>
</dbReference>
<dbReference type="GO" id="GO:0042777">
    <property type="term" value="P:proton motive force-driven plasma membrane ATP synthesis"/>
    <property type="evidence" value="ECO:0007669"/>
    <property type="project" value="UniProtKB-UniRule"/>
</dbReference>
<dbReference type="Gene3D" id="1.10.287.3240">
    <property type="match status" value="1"/>
</dbReference>
<dbReference type="HAMAP" id="MF_00271">
    <property type="entry name" value="ATP_synth_D_arch"/>
    <property type="match status" value="1"/>
</dbReference>
<dbReference type="InterPro" id="IPR002699">
    <property type="entry name" value="V_ATPase_D"/>
</dbReference>
<dbReference type="NCBIfam" id="NF001545">
    <property type="entry name" value="PRK00373.1-4"/>
    <property type="match status" value="1"/>
</dbReference>
<dbReference type="NCBIfam" id="TIGR00309">
    <property type="entry name" value="V_ATPase_subD"/>
    <property type="match status" value="1"/>
</dbReference>
<dbReference type="PANTHER" id="PTHR11671">
    <property type="entry name" value="V-TYPE ATP SYNTHASE SUBUNIT D"/>
    <property type="match status" value="1"/>
</dbReference>
<dbReference type="Pfam" id="PF01813">
    <property type="entry name" value="ATP-synt_D"/>
    <property type="match status" value="1"/>
</dbReference>
<proteinExistence type="inferred from homology"/>
<organism>
    <name type="scientific">Methanobrevibacter smithii (strain ATCC 35061 / DSM 861 / OCM 144 / PS)</name>
    <dbReference type="NCBI Taxonomy" id="420247"/>
    <lineage>
        <taxon>Archaea</taxon>
        <taxon>Methanobacteriati</taxon>
        <taxon>Methanobacteriota</taxon>
        <taxon>Methanomada group</taxon>
        <taxon>Methanobacteria</taxon>
        <taxon>Methanobacteriales</taxon>
        <taxon>Methanobacteriaceae</taxon>
        <taxon>Methanobrevibacter</taxon>
    </lineage>
</organism>
<keyword id="KW-0066">ATP synthesis</keyword>
<keyword id="KW-1003">Cell membrane</keyword>
<keyword id="KW-0375">Hydrogen ion transport</keyword>
<keyword id="KW-0406">Ion transport</keyword>
<keyword id="KW-0472">Membrane</keyword>
<keyword id="KW-0813">Transport</keyword>